<name>FTSA_AGRFC</name>
<accession>P0A331</accession>
<accession>O30991</accession>
<organism>
    <name type="scientific">Agrobacterium fabrum (strain C58 / ATCC 33970)</name>
    <name type="common">Agrobacterium tumefaciens (strain C58)</name>
    <dbReference type="NCBI Taxonomy" id="176299"/>
    <lineage>
        <taxon>Bacteria</taxon>
        <taxon>Pseudomonadati</taxon>
        <taxon>Pseudomonadota</taxon>
        <taxon>Alphaproteobacteria</taxon>
        <taxon>Hyphomicrobiales</taxon>
        <taxon>Rhizobiaceae</taxon>
        <taxon>Rhizobium/Agrobacterium group</taxon>
        <taxon>Agrobacterium</taxon>
        <taxon>Agrobacterium tumefaciens complex</taxon>
    </lineage>
</organism>
<feature type="chain" id="PRO_0000062727" description="Cell division protein FtsA">
    <location>
        <begin position="1"/>
        <end position="443"/>
    </location>
</feature>
<evidence type="ECO:0000255" key="1">
    <source>
        <dbReference type="HAMAP-Rule" id="MF_02033"/>
    </source>
</evidence>
<protein>
    <recommendedName>
        <fullName evidence="1">Cell division protein FtsA</fullName>
    </recommendedName>
</protein>
<sequence>MSFFGSSHFGLPRLKPLSSKRSHIVSVLDIGSTKVVCMIGRLTPRQESEILPGRTHKVEIIGIGHQRSRGVKSGVIADLDALEGVIRLSVDAAERMAGLTVDSLIVNVSAGRLASDIYTASIDLGGQEVEASDLRKVLVAASQQSMRQDRAILHSLPTGYSLDGERGIRDPLSMYGDLLGVDMHVVTVERTALKNLELCVNRAHLSVEGMVATPYASGLAALVDDEVELGCAAIDMGGGTTTISVFAEGRLIHTDAIGLGGHHVTTDLARGLSTRIEDAERLKVVHGSALLNGADERDMISIPPIGEDDRDQPSQVSRALVTRIVRARIEETLELIRDRIQKSGFSPIVGKRVVLTGGASQLTGLPETARRILARNVRIGRPMGVAGLPVAAKGPAFSTACGLMIYPQVADIEIHAAQGGMFSPFGNGSGRIARVGQWLKESF</sequence>
<reference key="1">
    <citation type="journal article" date="2001" name="Science">
        <title>The genome of the natural genetic engineer Agrobacterium tumefaciens C58.</title>
        <authorList>
            <person name="Wood D.W."/>
            <person name="Setubal J.C."/>
            <person name="Kaul R."/>
            <person name="Monks D.E."/>
            <person name="Kitajima J.P."/>
            <person name="Okura V.K."/>
            <person name="Zhou Y."/>
            <person name="Chen L."/>
            <person name="Wood G.E."/>
            <person name="Almeida N.F. Jr."/>
            <person name="Woo L."/>
            <person name="Chen Y."/>
            <person name="Paulsen I.T."/>
            <person name="Eisen J.A."/>
            <person name="Karp P.D."/>
            <person name="Bovee D. Sr."/>
            <person name="Chapman P."/>
            <person name="Clendenning J."/>
            <person name="Deatherage G."/>
            <person name="Gillet W."/>
            <person name="Grant C."/>
            <person name="Kutyavin T."/>
            <person name="Levy R."/>
            <person name="Li M.-J."/>
            <person name="McClelland E."/>
            <person name="Palmieri A."/>
            <person name="Raymond C."/>
            <person name="Rouse G."/>
            <person name="Saenphimmachak C."/>
            <person name="Wu Z."/>
            <person name="Romero P."/>
            <person name="Gordon D."/>
            <person name="Zhang S."/>
            <person name="Yoo H."/>
            <person name="Tao Y."/>
            <person name="Biddle P."/>
            <person name="Jung M."/>
            <person name="Krespan W."/>
            <person name="Perry M."/>
            <person name="Gordon-Kamm B."/>
            <person name="Liao L."/>
            <person name="Kim S."/>
            <person name="Hendrick C."/>
            <person name="Zhao Z.-Y."/>
            <person name="Dolan M."/>
            <person name="Chumley F."/>
            <person name="Tingey S.V."/>
            <person name="Tomb J.-F."/>
            <person name="Gordon M.P."/>
            <person name="Olson M.V."/>
            <person name="Nester E.W."/>
        </authorList>
    </citation>
    <scope>NUCLEOTIDE SEQUENCE [LARGE SCALE GENOMIC DNA]</scope>
    <source>
        <strain>C58 / ATCC 33970</strain>
    </source>
</reference>
<reference key="2">
    <citation type="journal article" date="2001" name="Science">
        <title>Genome sequence of the plant pathogen and biotechnology agent Agrobacterium tumefaciens C58.</title>
        <authorList>
            <person name="Goodner B."/>
            <person name="Hinkle G."/>
            <person name="Gattung S."/>
            <person name="Miller N."/>
            <person name="Blanchard M."/>
            <person name="Qurollo B."/>
            <person name="Goldman B.S."/>
            <person name="Cao Y."/>
            <person name="Askenazi M."/>
            <person name="Halling C."/>
            <person name="Mullin L."/>
            <person name="Houmiel K."/>
            <person name="Gordon J."/>
            <person name="Vaudin M."/>
            <person name="Iartchouk O."/>
            <person name="Epp A."/>
            <person name="Liu F."/>
            <person name="Wollam C."/>
            <person name="Allinger M."/>
            <person name="Doughty D."/>
            <person name="Scott C."/>
            <person name="Lappas C."/>
            <person name="Markelz B."/>
            <person name="Flanagan C."/>
            <person name="Crowell C."/>
            <person name="Gurson J."/>
            <person name="Lomo C."/>
            <person name="Sear C."/>
            <person name="Strub G."/>
            <person name="Cielo C."/>
            <person name="Slater S."/>
        </authorList>
    </citation>
    <scope>NUCLEOTIDE SEQUENCE [LARGE SCALE GENOMIC DNA]</scope>
    <source>
        <strain>C58 / ATCC 33970</strain>
    </source>
</reference>
<gene>
    <name evidence="1" type="primary">ftsA</name>
    <name type="ordered locus">Atu2087</name>
    <name type="ORF">AGR_C_3785</name>
</gene>
<comment type="function">
    <text evidence="1">Cell division protein that is involved in the assembly of the Z ring. May serve as a membrane anchor for the Z ring.</text>
</comment>
<comment type="subunit">
    <text evidence="1">Self-interacts. Interacts with FtsZ.</text>
</comment>
<comment type="subcellular location">
    <subcellularLocation>
        <location evidence="1">Cell inner membrane</location>
        <topology evidence="1">Peripheral membrane protein</topology>
        <orientation evidence="1">Cytoplasmic side</orientation>
    </subcellularLocation>
    <text evidence="1">Localizes to the Z ring in an FtsZ-dependent manner. Targeted to the membrane through a conserved C-terminal amphipathic helix.</text>
</comment>
<comment type="similarity">
    <text evidence="1">Belongs to the FtsA/MreB family.</text>
</comment>
<keyword id="KW-0131">Cell cycle</keyword>
<keyword id="KW-0132">Cell division</keyword>
<keyword id="KW-0997">Cell inner membrane</keyword>
<keyword id="KW-1003">Cell membrane</keyword>
<keyword id="KW-0472">Membrane</keyword>
<keyword id="KW-1185">Reference proteome</keyword>
<dbReference type="EMBL" id="AE007869">
    <property type="protein sequence ID" value="AAK87837.1"/>
    <property type="molecule type" value="Genomic_DNA"/>
</dbReference>
<dbReference type="PIR" id="AH2832">
    <property type="entry name" value="AH2832"/>
</dbReference>
<dbReference type="PIR" id="D97610">
    <property type="entry name" value="D97610"/>
</dbReference>
<dbReference type="RefSeq" id="NP_355052.1">
    <property type="nucleotide sequence ID" value="NC_003062.2"/>
</dbReference>
<dbReference type="RefSeq" id="WP_004442783.1">
    <property type="nucleotide sequence ID" value="NC_003062.2"/>
</dbReference>
<dbReference type="SMR" id="P0A331"/>
<dbReference type="STRING" id="176299.Atu2087"/>
<dbReference type="EnsemblBacteria" id="AAK87837">
    <property type="protein sequence ID" value="AAK87837"/>
    <property type="gene ID" value="Atu2087"/>
</dbReference>
<dbReference type="GeneID" id="97364829"/>
<dbReference type="KEGG" id="atu:Atu2087"/>
<dbReference type="PATRIC" id="fig|176299.10.peg.2100"/>
<dbReference type="eggNOG" id="COG0849">
    <property type="taxonomic scope" value="Bacteria"/>
</dbReference>
<dbReference type="HOGENOM" id="CLU_037850_3_0_5"/>
<dbReference type="OrthoDB" id="9810567at2"/>
<dbReference type="PhylomeDB" id="P0A331"/>
<dbReference type="BioCyc" id="AGRO:ATU2087-MONOMER"/>
<dbReference type="Proteomes" id="UP000000813">
    <property type="component" value="Chromosome circular"/>
</dbReference>
<dbReference type="GO" id="GO:0032153">
    <property type="term" value="C:cell division site"/>
    <property type="evidence" value="ECO:0007669"/>
    <property type="project" value="UniProtKB-UniRule"/>
</dbReference>
<dbReference type="GO" id="GO:0009898">
    <property type="term" value="C:cytoplasmic side of plasma membrane"/>
    <property type="evidence" value="ECO:0007669"/>
    <property type="project" value="UniProtKB-UniRule"/>
</dbReference>
<dbReference type="GO" id="GO:0043093">
    <property type="term" value="P:FtsZ-dependent cytokinesis"/>
    <property type="evidence" value="ECO:0007669"/>
    <property type="project" value="UniProtKB-UniRule"/>
</dbReference>
<dbReference type="CDD" id="cd24048">
    <property type="entry name" value="ASKHA_NBD_FtsA"/>
    <property type="match status" value="1"/>
</dbReference>
<dbReference type="Gene3D" id="3.30.1490.110">
    <property type="match status" value="1"/>
</dbReference>
<dbReference type="Gene3D" id="3.30.420.40">
    <property type="match status" value="1"/>
</dbReference>
<dbReference type="HAMAP" id="MF_02033">
    <property type="entry name" value="FtsA"/>
    <property type="match status" value="1"/>
</dbReference>
<dbReference type="InterPro" id="IPR043129">
    <property type="entry name" value="ATPase_NBD"/>
</dbReference>
<dbReference type="InterPro" id="IPR020823">
    <property type="entry name" value="Cell_div_FtsA"/>
</dbReference>
<dbReference type="InterPro" id="IPR050696">
    <property type="entry name" value="FtsA/MreB"/>
</dbReference>
<dbReference type="InterPro" id="IPR003494">
    <property type="entry name" value="SHS2_FtsA"/>
</dbReference>
<dbReference type="NCBIfam" id="TIGR01174">
    <property type="entry name" value="ftsA"/>
    <property type="match status" value="1"/>
</dbReference>
<dbReference type="PANTHER" id="PTHR32432:SF4">
    <property type="entry name" value="CELL DIVISION PROTEIN FTSA"/>
    <property type="match status" value="1"/>
</dbReference>
<dbReference type="PANTHER" id="PTHR32432">
    <property type="entry name" value="CELL DIVISION PROTEIN FTSA-RELATED"/>
    <property type="match status" value="1"/>
</dbReference>
<dbReference type="Pfam" id="PF14450">
    <property type="entry name" value="FtsA"/>
    <property type="match status" value="2"/>
</dbReference>
<dbReference type="Pfam" id="PF02491">
    <property type="entry name" value="SHS2_FTSA"/>
    <property type="match status" value="1"/>
</dbReference>
<dbReference type="PIRSF" id="PIRSF003101">
    <property type="entry name" value="FtsA"/>
    <property type="match status" value="1"/>
</dbReference>
<dbReference type="SMART" id="SM00842">
    <property type="entry name" value="FtsA"/>
    <property type="match status" value="1"/>
</dbReference>
<dbReference type="SUPFAM" id="SSF53067">
    <property type="entry name" value="Actin-like ATPase domain"/>
    <property type="match status" value="2"/>
</dbReference>
<proteinExistence type="inferred from homology"/>